<proteinExistence type="inferred from homology"/>
<organism>
    <name type="scientific">Murid herpesvirus 1 (strain Smith)</name>
    <name type="common">MuHV-1</name>
    <name type="synonym">Mouse cytomegalovirus</name>
    <dbReference type="NCBI Taxonomy" id="10367"/>
    <lineage>
        <taxon>Viruses</taxon>
        <taxon>Duplodnaviria</taxon>
        <taxon>Heunggongvirae</taxon>
        <taxon>Peploviricota</taxon>
        <taxon>Herviviricetes</taxon>
        <taxon>Herpesvirales</taxon>
        <taxon>Orthoherpesviridae</taxon>
        <taxon>Betaherpesvirinae</taxon>
        <taxon>Muromegalovirus</taxon>
        <taxon>Muromegalovirus muridbeta1</taxon>
        <taxon>Murid herpesvirus 1</taxon>
    </lineage>
</organism>
<protein>
    <recommendedName>
        <fullName evidence="1">Tripartite terminase subunit 1</fullName>
    </recommendedName>
</protein>
<reference key="1">
    <citation type="journal article" date="1992" name="Virology">
        <title>Characterization of the murine cytomegalovirus genes encoding the major DNA binding protein and the ICP18.5 homolog.</title>
        <authorList>
            <person name="Messerle M."/>
            <person name="Keil G.M."/>
            <person name="Schneider K."/>
            <person name="Koszinowski U.H."/>
        </authorList>
    </citation>
    <scope>NUCLEOTIDE SEQUENCE [GENOMIC DNA]</scope>
</reference>
<reference key="2">
    <citation type="journal article" date="1996" name="J. Virol.">
        <title>Analysis of the complete DNA sequence of murine cytomegalovirus.</title>
        <authorList>
            <person name="Rawlinson W.D."/>
            <person name="Farrell H.E."/>
            <person name="Barrell B.G."/>
        </authorList>
    </citation>
    <scope>NUCLEOTIDE SEQUENCE [LARGE SCALE GENOMIC DNA]</scope>
</reference>
<name>TRM1_MUHVS</name>
<organismHost>
    <name type="scientific">Mus musculus</name>
    <name type="common">Mouse</name>
    <dbReference type="NCBI Taxonomy" id="10090"/>
</organismHost>
<gene>
    <name evidence="1" type="primary">TRM1</name>
</gene>
<keyword id="KW-0067">ATP-binding</keyword>
<keyword id="KW-1048">Host nucleus</keyword>
<keyword id="KW-0426">Late protein</keyword>
<keyword id="KW-0479">Metal-binding</keyword>
<keyword id="KW-0547">Nucleotide-binding</keyword>
<keyword id="KW-1185">Reference proteome</keyword>
<keyword id="KW-0231">Viral genome packaging</keyword>
<keyword id="KW-1188">Viral release from host cell</keyword>
<keyword id="KW-0862">Zinc</keyword>
<keyword id="KW-0863">Zinc-finger</keyword>
<accession>P30674</accession>
<sequence>MAMNTLQKLCVVCSKCNECAMDVECLKYCDPNIVSMDSTAFRRNGVMVIHLYRTLYPALVSQNAVQTSVLTLYMEMLLQGLYDTMREIDMALTDFGTHRDRQRYYRRVLKLDSCNRHESITITFAPELALTIDLATLNDVERLLCKINCVYGAVDASQGVAVCRRLLSLLARLCDICPVAGPEIYRETVTCFQCYEELMAVPNQGRSINRRMQGLLCDHITIKKVLVQLDMDAQAVEQDMGDIAIRAPSVKGIIRAIKSLASFSPASYAYINDAEEALRGYNLFSEIPDRIYSLSDYTYWSKTSEAIVRHVGITMRQLNVSHSLWKTLRTELSRYHYGEDLEDVFTLGEGRFGGDERIYVGSIFAAPGKVVDMITSMSIKSFENNPLFNRLHESNEIYAKIKSLIEEIRGVGDGPAAGAARSRAEAASGAGAGGEEGAGAAAGRGNTGGDEGAGTTTAMSSALECGDPLLRVHDVNKEVNVRKRAYLKKVSEMGYNKVMACIRNQEHLVTKLVNVNLVGTVCLEAVSKIMNGFLSRQRSITEAETYPDVAESLGYDEHLYVINNLVHKRLPSELLPQLGQQIYRFINGPMFTHYLDRHPLPYNVNMAYACDNAGILPHVKEDLVRCADGTVVPSDWMTVGYMGFFRFADIRELNDLQKMVWAHIRELVLSVALYNETFGKQLALWRVEDGDEIGDGIILTYNPESPLILRRGDRSYRSRDLYLLLYKHLSVDSETLADAGSRASVADLCQVERPGPIAEQRSSTQNVKKKRKRMSLLELVRDVDGAGGDDLVPPCLYK</sequence>
<dbReference type="EMBL" id="X67021">
    <property type="protein sequence ID" value="CAA47415.1"/>
    <property type="molecule type" value="Genomic_DNA"/>
</dbReference>
<dbReference type="EMBL" id="U68299">
    <property type="status" value="NOT_ANNOTATED_CDS"/>
    <property type="molecule type" value="Genomic_DNA"/>
</dbReference>
<dbReference type="PIR" id="B44051">
    <property type="entry name" value="B44051"/>
</dbReference>
<dbReference type="SMR" id="P30674"/>
<dbReference type="Proteomes" id="UP000008774">
    <property type="component" value="Segment"/>
</dbReference>
<dbReference type="GO" id="GO:0042025">
    <property type="term" value="C:host cell nucleus"/>
    <property type="evidence" value="ECO:0007669"/>
    <property type="project" value="UniProtKB-SubCell"/>
</dbReference>
<dbReference type="GO" id="GO:0005524">
    <property type="term" value="F:ATP binding"/>
    <property type="evidence" value="ECO:0007669"/>
    <property type="project" value="UniProtKB-KW"/>
</dbReference>
<dbReference type="GO" id="GO:0008270">
    <property type="term" value="F:zinc ion binding"/>
    <property type="evidence" value="ECO:0007669"/>
    <property type="project" value="UniProtKB-KW"/>
</dbReference>
<dbReference type="GO" id="GO:0019073">
    <property type="term" value="P:viral DNA genome packaging"/>
    <property type="evidence" value="ECO:0007669"/>
    <property type="project" value="InterPro"/>
</dbReference>
<dbReference type="HAMAP" id="MF_04014">
    <property type="entry name" value="HSV_TRM1"/>
    <property type="match status" value="1"/>
</dbReference>
<dbReference type="InterPro" id="IPR000501">
    <property type="entry name" value="UL28/UL56"/>
</dbReference>
<dbReference type="Pfam" id="PF01366">
    <property type="entry name" value="PRTP"/>
    <property type="match status" value="1"/>
</dbReference>
<comment type="function">
    <text evidence="1">Component of the molecular motor that translocates viral genomic DNA in empty capsid during DNA packaging. Forms a tripartite terminase complex together with TRM2 and TRM3 in the host cytoplasm. Once the complex reaches the host nucleus, it interacts with the capsid portal vertex. This portal forms a ring in which genomic DNA is translocated into the capsid. TRM1 carries an endonuclease activity that plays an important role for the cleavage of concatemeric viral DNA into unit length genomes.</text>
</comment>
<comment type="subunit">
    <text evidence="1">Associates with TRM2 and TRM3 to form the tripartite terminase complex. Interacts with portal protein.</text>
</comment>
<comment type="subcellular location">
    <subcellularLocation>
        <location evidence="1">Host nucleus</location>
    </subcellularLocation>
    <text evidence="1">Found associated with the external surface of the viral capsid during assembly and DNA packaging, but seems absent in extracellular mature virions.</text>
</comment>
<comment type="similarity">
    <text evidence="1">Belongs to the herpesviridae TRM1 protein family.</text>
</comment>
<evidence type="ECO:0000255" key="1">
    <source>
        <dbReference type="HAMAP-Rule" id="MF_04014"/>
    </source>
</evidence>
<evidence type="ECO:0000256" key="2">
    <source>
        <dbReference type="SAM" id="MobiDB-lite"/>
    </source>
</evidence>
<feature type="chain" id="PRO_0000115891" description="Tripartite terminase subunit 1">
    <location>
        <begin position="1"/>
        <end position="798"/>
    </location>
</feature>
<feature type="zinc finger region" description="C3H1-type" evidence="1">
    <location>
        <begin position="191"/>
        <end position="219"/>
    </location>
</feature>
<feature type="region of interest" description="Disordered" evidence="2">
    <location>
        <begin position="416"/>
        <end position="458"/>
    </location>
</feature>
<feature type="compositionally biased region" description="Low complexity" evidence="2">
    <location>
        <begin position="416"/>
        <end position="429"/>
    </location>
</feature>
<feature type="compositionally biased region" description="Gly residues" evidence="2">
    <location>
        <begin position="430"/>
        <end position="452"/>
    </location>
</feature>
<feature type="binding site" evidence="1">
    <location>
        <begin position="674"/>
        <end position="681"/>
    </location>
    <ligand>
        <name>ATP</name>
        <dbReference type="ChEBI" id="CHEBI:30616"/>
    </ligand>
</feature>